<proteinExistence type="evidence at transcript level"/>
<evidence type="ECO:0000250" key="1"/>
<evidence type="ECO:0000255" key="2"/>
<evidence type="ECO:0000305" key="3"/>
<organism>
    <name type="scientific">Conus litteratus</name>
    <name type="common">Lettered cone</name>
    <dbReference type="NCBI Taxonomy" id="89445"/>
    <lineage>
        <taxon>Eukaryota</taxon>
        <taxon>Metazoa</taxon>
        <taxon>Spiralia</taxon>
        <taxon>Lophotrochozoa</taxon>
        <taxon>Mollusca</taxon>
        <taxon>Gastropoda</taxon>
        <taxon>Caenogastropoda</taxon>
        <taxon>Neogastropoda</taxon>
        <taxon>Conoidea</taxon>
        <taxon>Conidae</taxon>
        <taxon>Conus</taxon>
        <taxon>Elisaconus</taxon>
    </lineage>
</organism>
<feature type="signal peptide" evidence="2">
    <location>
        <begin position="1"/>
        <end position="23"/>
    </location>
</feature>
<feature type="propeptide" id="PRO_0000315504" evidence="1">
    <location>
        <begin position="24"/>
        <end position="49"/>
    </location>
</feature>
<feature type="peptide" id="PRO_0000315505" description="Conotoxin Lt15a">
    <location>
        <begin position="50"/>
        <end position="86"/>
    </location>
</feature>
<name>CO2FA_CONLT</name>
<accession>Q2I2Q6</accession>
<protein>
    <recommendedName>
        <fullName>Conotoxin Lt15a</fullName>
    </recommendedName>
    <alternativeName>
        <fullName>Lt15.1</fullName>
    </alternativeName>
</protein>
<keyword id="KW-1015">Disulfide bond</keyword>
<keyword id="KW-0964">Secreted</keyword>
<keyword id="KW-0732">Signal</keyword>
<keyword id="KW-0800">Toxin</keyword>
<comment type="subcellular location">
    <subcellularLocation>
        <location evidence="1">Secreted</location>
    </subcellularLocation>
</comment>
<comment type="tissue specificity">
    <text>Expressed by the venom duct.</text>
</comment>
<comment type="domain">
    <text>The cysteine framework is XV (C-C-CC-C-C-C-C).</text>
</comment>
<comment type="PTM">
    <text evidence="1">Contains 4 disulfide bonds.</text>
</comment>
<comment type="similarity">
    <text evidence="3">Belongs to the conotoxin O2 superfamily.</text>
</comment>
<reference key="1">
    <citation type="journal article" date="2006" name="Genomics">
        <title>Diversity and evolution of conotoxins based on gene expression profiling of Conus litteratus.</title>
        <authorList>
            <person name="Pi C."/>
            <person name="Liu J."/>
            <person name="Peng C."/>
            <person name="Liu Y."/>
            <person name="Jiang X."/>
            <person name="Zhao Y."/>
            <person name="Tang S."/>
            <person name="Wang L."/>
            <person name="Dong M."/>
            <person name="Chen S."/>
            <person name="Xu A."/>
        </authorList>
    </citation>
    <scope>NUCLEOTIDE SEQUENCE [MRNA]</scope>
    <source>
        <tissue>Venom duct</tissue>
    </source>
</reference>
<dbReference type="EMBL" id="DQ345376">
    <property type="protein sequence ID" value="ABC74984.1"/>
    <property type="molecule type" value="mRNA"/>
</dbReference>
<dbReference type="SMR" id="Q2I2Q6"/>
<dbReference type="ConoServer" id="1162">
    <property type="toxin name" value="LtXVA precursor"/>
</dbReference>
<dbReference type="GO" id="GO:0005576">
    <property type="term" value="C:extracellular region"/>
    <property type="evidence" value="ECO:0007669"/>
    <property type="project" value="UniProtKB-SubCell"/>
</dbReference>
<dbReference type="GO" id="GO:0008200">
    <property type="term" value="F:ion channel inhibitor activity"/>
    <property type="evidence" value="ECO:0007669"/>
    <property type="project" value="InterPro"/>
</dbReference>
<dbReference type="GO" id="GO:0090729">
    <property type="term" value="F:toxin activity"/>
    <property type="evidence" value="ECO:0007669"/>
    <property type="project" value="UniProtKB-KW"/>
</dbReference>
<dbReference type="InterPro" id="IPR004214">
    <property type="entry name" value="Conotoxin"/>
</dbReference>
<dbReference type="Pfam" id="PF02950">
    <property type="entry name" value="Conotoxin"/>
    <property type="match status" value="1"/>
</dbReference>
<sequence length="86" mass="9697">MEKLTILILVATVLLAIQVLVQSDGENPVKGRVKHYAAKRFSALFRGPRECTTKHRRCEKDEECCPNLECKCLTSPDCQSGYKCKP</sequence>